<reference key="1">
    <citation type="journal article" date="1995" name="Dev. Dyn.">
        <title>New gene, nel, encoding a M(r) 93 K protein with EGF-like repeats is strongly expressed in neural tissues of early stage chick embryos.</title>
        <authorList>
            <person name="Matsuhashi S."/>
            <person name="Noji S."/>
            <person name="Koyama E."/>
            <person name="Myokai F."/>
            <person name="Ohuchi H."/>
            <person name="Taniguchi S."/>
            <person name="Hori K."/>
        </authorList>
    </citation>
    <scope>NUCLEOTIDE SEQUENCE [MRNA]</scope>
    <source>
        <tissue>Embryo</tissue>
    </source>
</reference>
<accession>Q90827</accession>
<protein>
    <recommendedName>
        <fullName>Protein NEL</fullName>
    </recommendedName>
    <alternativeName>
        <fullName>93 kDa protein</fullName>
    </alternativeName>
</protein>
<gene>
    <name type="primary">NEL</name>
</gene>
<proteinExistence type="evidence at transcript level"/>
<organism>
    <name type="scientific">Gallus gallus</name>
    <name type="common">Chicken</name>
    <dbReference type="NCBI Taxonomy" id="9031"/>
    <lineage>
        <taxon>Eukaryota</taxon>
        <taxon>Metazoa</taxon>
        <taxon>Chordata</taxon>
        <taxon>Craniata</taxon>
        <taxon>Vertebrata</taxon>
        <taxon>Euteleostomi</taxon>
        <taxon>Archelosauria</taxon>
        <taxon>Archosauria</taxon>
        <taxon>Dinosauria</taxon>
        <taxon>Saurischia</taxon>
        <taxon>Theropoda</taxon>
        <taxon>Coelurosauria</taxon>
        <taxon>Aves</taxon>
        <taxon>Neognathae</taxon>
        <taxon>Galloanserae</taxon>
        <taxon>Galliformes</taxon>
        <taxon>Phasianidae</taxon>
        <taxon>Phasianinae</taxon>
        <taxon>Gallus</taxon>
    </lineage>
</organism>
<sequence>MESGCGLGTLCLLLCLGPVVGFGVDPSLQIDVLSELGLPGYAAGVRQVPGLHNGSKAFLFPDTSRSVKASPETAEIFFQKLRNKYEFTILVTLKQAHLNSGVIFSIHHLDHRYLELESSGHRNEIRLHYRTGSHRSHTEVFPYILADDKWHRLSLAISASHLILHVDCNKIYERVVEKPFMDLPVGTTFWLGQRNNAHGYFKGIMQDVQLLVMPQGFISQCPDLNRTCPTCNDFHGLVQKIMELQDILAKTSAKLSQAEQRMNKLDQCYCERTCTMKGMTYREFESWTDGCKNCTCMNGTVQCEALICSLSDCPPNSALSYVDGKCCKECQSVCIFEGRTYFEGQRETVYSSSGDCVLFECKDHKMQRIPKDSCATLNCPESQQIPLSHSCCKICKGHDFCTEGHNCMEHSVCRNLDDRAVCSCRDGFRALREDNAYCEDVDECAEGQHYCRENTMCVNTPGSFMCICKTGYIRIDDYSCTEHDECVTNQHNCDENALCFNTVGGHNCVCKLGYTGNGTVCKAFCKDGCRNGGACIASNVCACPQGFTGPSCETDIDECSDGFVQCDSRANCINLPGWYHCECRDGYHDNGMFSPSGESCEDIDECATGRHSCANDTVCFNLDGGYDCRCPHGKNCTGDCIHEDKIKHNGQIWVLENDRCSVCSCQSGYVMCRRMVCDCENPTVDLFCCPECDPRLSSQCLHQSGELSYNSGDSWIQNCQQCRCLQGEVDCWPLPCPEVDCEFSVLPENECCPRCVTDPCQADTIRNDITKTCLDETNVVRFTGSSWIKHGTECTLCQCKNGHVCCSVDPQCLQEL</sequence>
<comment type="tissue specificity">
    <text>Strongly expressed in early embryonic neural tissues (brain, spinal cord, dorsal root ganglia); less in other tissues such as cells around cartilage, myocardium, lung mesenchymal cells, and liver. After hatching expression is restricted to neural tissues including retina.</text>
</comment>
<evidence type="ECO:0000255" key="1"/>
<evidence type="ECO:0000255" key="2">
    <source>
        <dbReference type="PROSITE-ProRule" id="PRU00076"/>
    </source>
</evidence>
<evidence type="ECO:0000255" key="3">
    <source>
        <dbReference type="PROSITE-ProRule" id="PRU00220"/>
    </source>
</evidence>
<feature type="signal peptide" evidence="1">
    <location>
        <begin position="1"/>
        <end position="21"/>
    </location>
</feature>
<feature type="chain" id="PRO_0000007663" description="Protein NEL">
    <location>
        <begin position="22"/>
        <end position="816"/>
    </location>
</feature>
<feature type="domain" description="Laminin G-like">
    <location>
        <begin position="65"/>
        <end position="228"/>
    </location>
</feature>
<feature type="domain" description="VWFC 1" evidence="3">
    <location>
        <begin position="272"/>
        <end position="331"/>
    </location>
</feature>
<feature type="domain" description="EGF-like 1" evidence="2">
    <location>
        <begin position="397"/>
        <end position="439"/>
    </location>
</feature>
<feature type="domain" description="EGF-like 2; calcium-binding" evidence="2">
    <location>
        <begin position="440"/>
        <end position="481"/>
    </location>
</feature>
<feature type="domain" description="EGF-like 3; calcium-binding" evidence="2">
    <location>
        <begin position="482"/>
        <end position="522"/>
    </location>
</feature>
<feature type="domain" description="EGF-like 4" evidence="2">
    <location>
        <begin position="523"/>
        <end position="553"/>
    </location>
</feature>
<feature type="domain" description="EGF-like 5; calcium-binding" evidence="2">
    <location>
        <begin position="555"/>
        <end position="601"/>
    </location>
</feature>
<feature type="domain" description="EGF-like 6; calcium-binding" evidence="2">
    <location>
        <begin position="602"/>
        <end position="637"/>
    </location>
</feature>
<feature type="domain" description="VWFC 2" evidence="3">
    <location>
        <begin position="638"/>
        <end position="693"/>
    </location>
</feature>
<feature type="domain" description="VWFC 3" evidence="3">
    <location>
        <begin position="698"/>
        <end position="756"/>
    </location>
</feature>
<feature type="glycosylation site" description="N-linked (GlcNAc...) asparagine" evidence="1">
    <location>
        <position position="53"/>
    </location>
</feature>
<feature type="glycosylation site" description="N-linked (GlcNAc...) asparagine" evidence="1">
    <location>
        <position position="225"/>
    </location>
</feature>
<feature type="glycosylation site" description="N-linked (GlcNAc...) asparagine" evidence="1">
    <location>
        <position position="293"/>
    </location>
</feature>
<feature type="glycosylation site" description="N-linked (GlcNAc...) asparagine" evidence="1">
    <location>
        <position position="298"/>
    </location>
</feature>
<feature type="glycosylation site" description="N-linked (GlcNAc...) asparagine" evidence="1">
    <location>
        <position position="517"/>
    </location>
</feature>
<feature type="glycosylation site" description="N-linked (GlcNAc...) asparagine" evidence="1">
    <location>
        <position position="615"/>
    </location>
</feature>
<feature type="glycosylation site" description="N-linked (GlcNAc...) asparagine" evidence="1">
    <location>
        <position position="635"/>
    </location>
</feature>
<feature type="disulfide bond" evidence="2">
    <location>
        <begin position="401"/>
        <end position="413"/>
    </location>
</feature>
<feature type="disulfide bond" evidence="2">
    <location>
        <begin position="407"/>
        <end position="422"/>
    </location>
</feature>
<feature type="disulfide bond" evidence="2">
    <location>
        <begin position="424"/>
        <end position="438"/>
    </location>
</feature>
<feature type="disulfide bond" evidence="2">
    <location>
        <begin position="444"/>
        <end position="457"/>
    </location>
</feature>
<feature type="disulfide bond" evidence="2">
    <location>
        <begin position="451"/>
        <end position="466"/>
    </location>
</feature>
<feature type="disulfide bond" evidence="2">
    <location>
        <begin position="468"/>
        <end position="480"/>
    </location>
</feature>
<feature type="disulfide bond" evidence="2">
    <location>
        <begin position="486"/>
        <end position="499"/>
    </location>
</feature>
<feature type="disulfide bond" evidence="2">
    <location>
        <begin position="493"/>
        <end position="508"/>
    </location>
</feature>
<feature type="disulfide bond" evidence="2">
    <location>
        <begin position="510"/>
        <end position="521"/>
    </location>
</feature>
<feature type="disulfide bond" evidence="2">
    <location>
        <begin position="525"/>
        <end position="535"/>
    </location>
</feature>
<feature type="disulfide bond" evidence="2">
    <location>
        <begin position="529"/>
        <end position="541"/>
    </location>
</feature>
<feature type="disulfide bond" evidence="2">
    <location>
        <begin position="543"/>
        <end position="552"/>
    </location>
</feature>
<feature type="disulfide bond" evidence="2">
    <location>
        <begin position="559"/>
        <end position="572"/>
    </location>
</feature>
<feature type="disulfide bond" evidence="2">
    <location>
        <begin position="566"/>
        <end position="581"/>
    </location>
</feature>
<feature type="disulfide bond" evidence="2">
    <location>
        <begin position="583"/>
        <end position="600"/>
    </location>
</feature>
<feature type="disulfide bond" evidence="2">
    <location>
        <begin position="606"/>
        <end position="619"/>
    </location>
</feature>
<feature type="disulfide bond" evidence="2">
    <location>
        <begin position="613"/>
        <end position="628"/>
    </location>
</feature>
<feature type="disulfide bond" evidence="2">
    <location>
        <begin position="630"/>
        <end position="636"/>
    </location>
</feature>
<keyword id="KW-0106">Calcium</keyword>
<keyword id="KW-1015">Disulfide bond</keyword>
<keyword id="KW-0245">EGF-like domain</keyword>
<keyword id="KW-0325">Glycoprotein</keyword>
<keyword id="KW-1185">Reference proteome</keyword>
<keyword id="KW-0677">Repeat</keyword>
<keyword id="KW-0732">Signal</keyword>
<name>NEL_CHICK</name>
<dbReference type="EMBL" id="D86747">
    <property type="protein sequence ID" value="BAA13167.1"/>
    <property type="molecule type" value="mRNA"/>
</dbReference>
<dbReference type="RefSeq" id="NP_001025911.1">
    <property type="nucleotide sequence ID" value="NM_001030740.1"/>
</dbReference>
<dbReference type="SMR" id="Q90827"/>
<dbReference type="FunCoup" id="Q90827">
    <property type="interactions" value="33"/>
</dbReference>
<dbReference type="STRING" id="9031.ENSGALP00000037995"/>
<dbReference type="GlyCosmos" id="Q90827">
    <property type="glycosylation" value="7 sites, No reported glycans"/>
</dbReference>
<dbReference type="GlyGen" id="Q90827">
    <property type="glycosylation" value="7 sites"/>
</dbReference>
<dbReference type="PaxDb" id="9031-ENSGALP00000037995"/>
<dbReference type="Ensembl" id="ENSGALT00010033009.1">
    <property type="protein sequence ID" value="ENSGALP00010019514.1"/>
    <property type="gene ID" value="ENSGALG00010013749.1"/>
</dbReference>
<dbReference type="GeneID" id="417799"/>
<dbReference type="KEGG" id="gga:417799"/>
<dbReference type="CTD" id="4753"/>
<dbReference type="VEuPathDB" id="HostDB:geneid_417799"/>
<dbReference type="eggNOG" id="KOG1217">
    <property type="taxonomic scope" value="Eukaryota"/>
</dbReference>
<dbReference type="GeneTree" id="ENSGT00810000125439"/>
<dbReference type="InParanoid" id="Q90827"/>
<dbReference type="OMA" id="QXYLELE"/>
<dbReference type="OrthoDB" id="6516201at2759"/>
<dbReference type="PhylomeDB" id="Q90827"/>
<dbReference type="PRO" id="PR:Q90827"/>
<dbReference type="Proteomes" id="UP000000539">
    <property type="component" value="Chromosome 1"/>
</dbReference>
<dbReference type="GO" id="GO:0005737">
    <property type="term" value="C:cytoplasm"/>
    <property type="evidence" value="ECO:0000318"/>
    <property type="project" value="GO_Central"/>
</dbReference>
<dbReference type="GO" id="GO:0005615">
    <property type="term" value="C:extracellular space"/>
    <property type="evidence" value="ECO:0000314"/>
    <property type="project" value="AgBase"/>
</dbReference>
<dbReference type="GO" id="GO:0005509">
    <property type="term" value="F:calcium ion binding"/>
    <property type="evidence" value="ECO:0007669"/>
    <property type="project" value="Ensembl"/>
</dbReference>
<dbReference type="GO" id="GO:0008201">
    <property type="term" value="F:heparin binding"/>
    <property type="evidence" value="ECO:0000314"/>
    <property type="project" value="AgBase"/>
</dbReference>
<dbReference type="GO" id="GO:0042802">
    <property type="term" value="F:identical protein binding"/>
    <property type="evidence" value="ECO:0007669"/>
    <property type="project" value="Ensembl"/>
</dbReference>
<dbReference type="GO" id="GO:0005080">
    <property type="term" value="F:protein kinase C binding"/>
    <property type="evidence" value="ECO:0000318"/>
    <property type="project" value="GO_Central"/>
</dbReference>
<dbReference type="GO" id="GO:0008283">
    <property type="term" value="P:cell population proliferation"/>
    <property type="evidence" value="ECO:0000314"/>
    <property type="project" value="AgBase"/>
</dbReference>
<dbReference type="GO" id="GO:0071679">
    <property type="term" value="P:commissural neuron axon guidance"/>
    <property type="evidence" value="ECO:0007669"/>
    <property type="project" value="Ensembl"/>
</dbReference>
<dbReference type="GO" id="GO:0009566">
    <property type="term" value="P:fertilization"/>
    <property type="evidence" value="ECO:0007669"/>
    <property type="project" value="Ensembl"/>
</dbReference>
<dbReference type="GO" id="GO:0090260">
    <property type="term" value="P:negative regulation of retinal ganglion cell axon guidance"/>
    <property type="evidence" value="ECO:0000314"/>
    <property type="project" value="AgBase"/>
</dbReference>
<dbReference type="GO" id="GO:0001755">
    <property type="term" value="P:neural crest cell migration"/>
    <property type="evidence" value="ECO:0000314"/>
    <property type="project" value="AgBase"/>
</dbReference>
<dbReference type="GO" id="GO:0051781">
    <property type="term" value="P:positive regulation of cell division"/>
    <property type="evidence" value="ECO:0000314"/>
    <property type="project" value="AgBase"/>
</dbReference>
<dbReference type="GO" id="GO:0045666">
    <property type="term" value="P:positive regulation of neuron differentiation"/>
    <property type="evidence" value="ECO:0000314"/>
    <property type="project" value="AgBase"/>
</dbReference>
<dbReference type="CDD" id="cd00054">
    <property type="entry name" value="EGF_CA"/>
    <property type="match status" value="3"/>
</dbReference>
<dbReference type="CDD" id="cd00110">
    <property type="entry name" value="LamG"/>
    <property type="match status" value="1"/>
</dbReference>
<dbReference type="FunFam" id="2.10.25.10:FF:000121">
    <property type="entry name" value="Neural EGFL like 2"/>
    <property type="match status" value="1"/>
</dbReference>
<dbReference type="FunFam" id="2.10.25.10:FF:000120">
    <property type="entry name" value="Protein kinase C-binding protein NELL1"/>
    <property type="match status" value="1"/>
</dbReference>
<dbReference type="FunFam" id="2.10.25.10:FF:000211">
    <property type="entry name" value="Protein kinase C-binding protein NELL1"/>
    <property type="match status" value="1"/>
</dbReference>
<dbReference type="FunFam" id="2.60.120.200:FF:000015">
    <property type="entry name" value="protein kinase C-binding protein NELL1"/>
    <property type="match status" value="1"/>
</dbReference>
<dbReference type="FunFam" id="2.10.25.10:FF:000102">
    <property type="entry name" value="Protein kinase C-binding protein NELL2"/>
    <property type="match status" value="1"/>
</dbReference>
<dbReference type="FunFam" id="2.10.25.10:FF:000111">
    <property type="entry name" value="Protein kinase C-binding protein NELL2"/>
    <property type="match status" value="1"/>
</dbReference>
<dbReference type="FunFam" id="2.10.70.10:FF:000023">
    <property type="entry name" value="protein kinase C-binding protein NELL2"/>
    <property type="match status" value="1"/>
</dbReference>
<dbReference type="Gene3D" id="2.60.120.200">
    <property type="match status" value="1"/>
</dbReference>
<dbReference type="Gene3D" id="6.20.200.20">
    <property type="match status" value="1"/>
</dbReference>
<dbReference type="Gene3D" id="2.10.70.10">
    <property type="entry name" value="Complement Module, domain 1"/>
    <property type="match status" value="2"/>
</dbReference>
<dbReference type="Gene3D" id="2.10.25.10">
    <property type="entry name" value="Laminin"/>
    <property type="match status" value="6"/>
</dbReference>
<dbReference type="InterPro" id="IPR013320">
    <property type="entry name" value="ConA-like_dom_sf"/>
</dbReference>
<dbReference type="InterPro" id="IPR001881">
    <property type="entry name" value="EGF-like_Ca-bd_dom"/>
</dbReference>
<dbReference type="InterPro" id="IPR000742">
    <property type="entry name" value="EGF-like_dom"/>
</dbReference>
<dbReference type="InterPro" id="IPR000152">
    <property type="entry name" value="EGF-type_Asp/Asn_hydroxyl_site"/>
</dbReference>
<dbReference type="InterPro" id="IPR018097">
    <property type="entry name" value="EGF_Ca-bd_CS"/>
</dbReference>
<dbReference type="InterPro" id="IPR024731">
    <property type="entry name" value="EGF_dom"/>
</dbReference>
<dbReference type="InterPro" id="IPR009030">
    <property type="entry name" value="Growth_fac_rcpt_cys_sf"/>
</dbReference>
<dbReference type="InterPro" id="IPR001791">
    <property type="entry name" value="Laminin_G"/>
</dbReference>
<dbReference type="InterPro" id="IPR049883">
    <property type="entry name" value="NOTCH1_EGF-like"/>
</dbReference>
<dbReference type="InterPro" id="IPR051586">
    <property type="entry name" value="PKC-binding_NELL"/>
</dbReference>
<dbReference type="InterPro" id="IPR048287">
    <property type="entry name" value="TSPN-like_N"/>
</dbReference>
<dbReference type="InterPro" id="IPR001007">
    <property type="entry name" value="VWF_dom"/>
</dbReference>
<dbReference type="PANTHER" id="PTHR24042">
    <property type="entry name" value="NEL HOMOLOG"/>
    <property type="match status" value="1"/>
</dbReference>
<dbReference type="PANTHER" id="PTHR24042:SF0">
    <property type="entry name" value="PROTEIN KINASE C-BINDING PROTEIN NELL2"/>
    <property type="match status" value="1"/>
</dbReference>
<dbReference type="Pfam" id="PF12947">
    <property type="entry name" value="EGF_3"/>
    <property type="match status" value="1"/>
</dbReference>
<dbReference type="Pfam" id="PF07645">
    <property type="entry name" value="EGF_CA"/>
    <property type="match status" value="3"/>
</dbReference>
<dbReference type="Pfam" id="PF02210">
    <property type="entry name" value="Laminin_G_2"/>
    <property type="match status" value="1"/>
</dbReference>
<dbReference type="Pfam" id="PF00093">
    <property type="entry name" value="VWC"/>
    <property type="match status" value="2"/>
</dbReference>
<dbReference type="SMART" id="SM00181">
    <property type="entry name" value="EGF"/>
    <property type="match status" value="6"/>
</dbReference>
<dbReference type="SMART" id="SM00179">
    <property type="entry name" value="EGF_CA"/>
    <property type="match status" value="5"/>
</dbReference>
<dbReference type="SMART" id="SM00282">
    <property type="entry name" value="LamG"/>
    <property type="match status" value="1"/>
</dbReference>
<dbReference type="SMART" id="SM00210">
    <property type="entry name" value="TSPN"/>
    <property type="match status" value="1"/>
</dbReference>
<dbReference type="SMART" id="SM00214">
    <property type="entry name" value="VWC"/>
    <property type="match status" value="3"/>
</dbReference>
<dbReference type="SMART" id="SM00215">
    <property type="entry name" value="VWC_out"/>
    <property type="match status" value="2"/>
</dbReference>
<dbReference type="SUPFAM" id="SSF49899">
    <property type="entry name" value="Concanavalin A-like lectins/glucanases"/>
    <property type="match status" value="1"/>
</dbReference>
<dbReference type="SUPFAM" id="SSF57196">
    <property type="entry name" value="EGF/Laminin"/>
    <property type="match status" value="1"/>
</dbReference>
<dbReference type="SUPFAM" id="SSF57603">
    <property type="entry name" value="FnI-like domain"/>
    <property type="match status" value="3"/>
</dbReference>
<dbReference type="SUPFAM" id="SSF57184">
    <property type="entry name" value="Growth factor receptor domain"/>
    <property type="match status" value="1"/>
</dbReference>
<dbReference type="PROSITE" id="PS00010">
    <property type="entry name" value="ASX_HYDROXYL"/>
    <property type="match status" value="3"/>
</dbReference>
<dbReference type="PROSITE" id="PS00022">
    <property type="entry name" value="EGF_1"/>
    <property type="match status" value="1"/>
</dbReference>
<dbReference type="PROSITE" id="PS01186">
    <property type="entry name" value="EGF_2"/>
    <property type="match status" value="4"/>
</dbReference>
<dbReference type="PROSITE" id="PS50026">
    <property type="entry name" value="EGF_3"/>
    <property type="match status" value="6"/>
</dbReference>
<dbReference type="PROSITE" id="PS01187">
    <property type="entry name" value="EGF_CA"/>
    <property type="match status" value="3"/>
</dbReference>
<dbReference type="PROSITE" id="PS01208">
    <property type="entry name" value="VWFC_1"/>
    <property type="match status" value="2"/>
</dbReference>
<dbReference type="PROSITE" id="PS50184">
    <property type="entry name" value="VWFC_2"/>
    <property type="match status" value="3"/>
</dbReference>